<keyword id="KW-0249">Electron transport</keyword>
<keyword id="KW-0349">Heme</keyword>
<keyword id="KW-0408">Iron</keyword>
<keyword id="KW-0472">Membrane</keyword>
<keyword id="KW-0479">Metal-binding</keyword>
<keyword id="KW-0496">Mitochondrion</keyword>
<keyword id="KW-0999">Mitochondrion inner membrane</keyword>
<keyword id="KW-0679">Respiratory chain</keyword>
<keyword id="KW-0812">Transmembrane</keyword>
<keyword id="KW-1133">Transmembrane helix</keyword>
<keyword id="KW-0813">Transport</keyword>
<keyword id="KW-0830">Ubiquinone</keyword>
<organism>
    <name type="scientific">Albinaria caerulea</name>
    <name type="common">Land snail</name>
    <dbReference type="NCBI Taxonomy" id="42349"/>
    <lineage>
        <taxon>Eukaryota</taxon>
        <taxon>Metazoa</taxon>
        <taxon>Spiralia</taxon>
        <taxon>Lophotrochozoa</taxon>
        <taxon>Mollusca</taxon>
        <taxon>Gastropoda</taxon>
        <taxon>Heterobranchia</taxon>
        <taxon>Euthyneura</taxon>
        <taxon>Panpulmonata</taxon>
        <taxon>Eupulmonata</taxon>
        <taxon>Stylommatophora</taxon>
        <taxon>Helicina</taxon>
        <taxon>Clausilioidea</taxon>
        <taxon>Clausiliidae</taxon>
        <taxon>Alopiinae</taxon>
        <taxon>Albinaria</taxon>
    </lineage>
</organism>
<proteinExistence type="inferred from homology"/>
<geneLocation type="mitochondrion"/>
<evidence type="ECO:0000250" key="1"/>
<evidence type="ECO:0000250" key="2">
    <source>
        <dbReference type="UniProtKB" id="P00157"/>
    </source>
</evidence>
<evidence type="ECO:0000250" key="3">
    <source>
        <dbReference type="UniProtKB" id="P00163"/>
    </source>
</evidence>
<evidence type="ECO:0000255" key="4">
    <source>
        <dbReference type="PROSITE-ProRule" id="PRU00967"/>
    </source>
</evidence>
<evidence type="ECO:0000255" key="5">
    <source>
        <dbReference type="PROSITE-ProRule" id="PRU00968"/>
    </source>
</evidence>
<name>CYB_ALBCA</name>
<feature type="chain" id="PRO_0000060558" description="Cytochrome b">
    <location>
        <begin position="1"/>
        <end position="367"/>
    </location>
</feature>
<feature type="transmembrane region" description="Helical" evidence="2">
    <location>
        <begin position="20"/>
        <end position="40"/>
    </location>
</feature>
<feature type="transmembrane region" description="Helical" evidence="2">
    <location>
        <begin position="64"/>
        <end position="85"/>
    </location>
</feature>
<feature type="transmembrane region" description="Helical" evidence="2">
    <location>
        <begin position="101"/>
        <end position="121"/>
    </location>
</feature>
<feature type="transmembrane region" description="Helical" evidence="2">
    <location>
        <begin position="166"/>
        <end position="186"/>
    </location>
</feature>
<feature type="transmembrane region" description="Helical" evidence="2">
    <location>
        <begin position="214"/>
        <end position="234"/>
    </location>
</feature>
<feature type="transmembrane region" description="Helical" evidence="2">
    <location>
        <begin position="276"/>
        <end position="296"/>
    </location>
</feature>
<feature type="transmembrane region" description="Helical" evidence="2">
    <location>
        <begin position="308"/>
        <end position="328"/>
    </location>
</feature>
<feature type="transmembrane region" description="Helical" evidence="2">
    <location>
        <begin position="335"/>
        <end position="355"/>
    </location>
</feature>
<feature type="binding site" description="axial binding residue" evidence="2">
    <location>
        <position position="70"/>
    </location>
    <ligand>
        <name>heme b</name>
        <dbReference type="ChEBI" id="CHEBI:60344"/>
        <label>b562</label>
    </ligand>
    <ligandPart>
        <name>Fe</name>
        <dbReference type="ChEBI" id="CHEBI:18248"/>
    </ligandPart>
</feature>
<feature type="binding site" description="axial binding residue" evidence="2">
    <location>
        <position position="84"/>
    </location>
    <ligand>
        <name>heme b</name>
        <dbReference type="ChEBI" id="CHEBI:60344"/>
        <label>b566</label>
    </ligand>
    <ligandPart>
        <name>Fe</name>
        <dbReference type="ChEBI" id="CHEBI:18248"/>
    </ligandPart>
</feature>
<feature type="binding site" description="axial binding residue" evidence="2">
    <location>
        <position position="170"/>
    </location>
    <ligand>
        <name>heme b</name>
        <dbReference type="ChEBI" id="CHEBI:60344"/>
        <label>b562</label>
    </ligand>
    <ligandPart>
        <name>Fe</name>
        <dbReference type="ChEBI" id="CHEBI:18248"/>
    </ligandPart>
</feature>
<feature type="binding site" description="axial binding residue" evidence="2">
    <location>
        <position position="184"/>
    </location>
    <ligand>
        <name>heme b</name>
        <dbReference type="ChEBI" id="CHEBI:60344"/>
        <label>b566</label>
    </ligand>
    <ligandPart>
        <name>Fe</name>
        <dbReference type="ChEBI" id="CHEBI:18248"/>
    </ligandPart>
</feature>
<feature type="binding site" evidence="2">
    <location>
        <position position="189"/>
    </location>
    <ligand>
        <name>a ubiquinone</name>
        <dbReference type="ChEBI" id="CHEBI:16389"/>
    </ligand>
</feature>
<reference key="1">
    <citation type="journal article" date="1995" name="Genetics">
        <title>Complete sequence and gene organization of the mitochondrial genome of the land snail Albinaria coerulea.</title>
        <authorList>
            <person name="Hatzoglou E."/>
            <person name="Rodakis G.C."/>
            <person name="Lecanidou R."/>
        </authorList>
    </citation>
    <scope>NUCLEOTIDE SEQUENCE [GENOMIC DNA]</scope>
</reference>
<accession>P48884</accession>
<protein>
    <recommendedName>
        <fullName>Cytochrome b</fullName>
    </recommendedName>
    <alternativeName>
        <fullName>Complex III subunit 3</fullName>
    </alternativeName>
    <alternativeName>
        <fullName>Complex III subunit III</fullName>
    </alternativeName>
    <alternativeName>
        <fullName>Cytochrome b-c1 complex subunit 3</fullName>
    </alternativeName>
    <alternativeName>
        <fullName>Ubiquinol-cytochrome-c reductase complex cytochrome b subunit</fullName>
    </alternativeName>
</protein>
<dbReference type="EMBL" id="X83390">
    <property type="protein sequence ID" value="CAA58299.1"/>
    <property type="molecule type" value="Genomic_DNA"/>
</dbReference>
<dbReference type="PIR" id="S59146">
    <property type="entry name" value="S59146"/>
</dbReference>
<dbReference type="RefSeq" id="NP_007332.1">
    <property type="nucleotide sequence ID" value="NC_001761.1"/>
</dbReference>
<dbReference type="SMR" id="P48884"/>
<dbReference type="GeneID" id="808004"/>
<dbReference type="CTD" id="4519"/>
<dbReference type="GO" id="GO:0005743">
    <property type="term" value="C:mitochondrial inner membrane"/>
    <property type="evidence" value="ECO:0007669"/>
    <property type="project" value="UniProtKB-SubCell"/>
</dbReference>
<dbReference type="GO" id="GO:0045275">
    <property type="term" value="C:respiratory chain complex III"/>
    <property type="evidence" value="ECO:0007669"/>
    <property type="project" value="InterPro"/>
</dbReference>
<dbReference type="GO" id="GO:0046872">
    <property type="term" value="F:metal ion binding"/>
    <property type="evidence" value="ECO:0007669"/>
    <property type="project" value="UniProtKB-KW"/>
</dbReference>
<dbReference type="GO" id="GO:0008121">
    <property type="term" value="F:ubiquinol-cytochrome-c reductase activity"/>
    <property type="evidence" value="ECO:0007669"/>
    <property type="project" value="InterPro"/>
</dbReference>
<dbReference type="GO" id="GO:0006122">
    <property type="term" value="P:mitochondrial electron transport, ubiquinol to cytochrome c"/>
    <property type="evidence" value="ECO:0007669"/>
    <property type="project" value="TreeGrafter"/>
</dbReference>
<dbReference type="CDD" id="cd00290">
    <property type="entry name" value="cytochrome_b_C"/>
    <property type="match status" value="1"/>
</dbReference>
<dbReference type="CDD" id="cd00284">
    <property type="entry name" value="Cytochrome_b_N"/>
    <property type="match status" value="1"/>
</dbReference>
<dbReference type="Gene3D" id="1.20.810.10">
    <property type="entry name" value="Cytochrome Bc1 Complex, Chain C"/>
    <property type="match status" value="1"/>
</dbReference>
<dbReference type="InterPro" id="IPR005798">
    <property type="entry name" value="Cyt_b/b6_C"/>
</dbReference>
<dbReference type="InterPro" id="IPR036150">
    <property type="entry name" value="Cyt_b/b6_C_sf"/>
</dbReference>
<dbReference type="InterPro" id="IPR005797">
    <property type="entry name" value="Cyt_b/b6_N"/>
</dbReference>
<dbReference type="InterPro" id="IPR027387">
    <property type="entry name" value="Cytb/b6-like_sf"/>
</dbReference>
<dbReference type="InterPro" id="IPR030689">
    <property type="entry name" value="Cytochrome_b"/>
</dbReference>
<dbReference type="InterPro" id="IPR048260">
    <property type="entry name" value="Cytochrome_b_C_euk/bac"/>
</dbReference>
<dbReference type="InterPro" id="IPR048259">
    <property type="entry name" value="Cytochrome_b_N_euk/bac"/>
</dbReference>
<dbReference type="InterPro" id="IPR016174">
    <property type="entry name" value="Di-haem_cyt_TM"/>
</dbReference>
<dbReference type="PANTHER" id="PTHR19271">
    <property type="entry name" value="CYTOCHROME B"/>
    <property type="match status" value="1"/>
</dbReference>
<dbReference type="PANTHER" id="PTHR19271:SF16">
    <property type="entry name" value="CYTOCHROME B"/>
    <property type="match status" value="1"/>
</dbReference>
<dbReference type="Pfam" id="PF00032">
    <property type="entry name" value="Cytochrom_B_C"/>
    <property type="match status" value="1"/>
</dbReference>
<dbReference type="Pfam" id="PF00033">
    <property type="entry name" value="Cytochrome_B"/>
    <property type="match status" value="1"/>
</dbReference>
<dbReference type="PIRSF" id="PIRSF038885">
    <property type="entry name" value="COB"/>
    <property type="match status" value="1"/>
</dbReference>
<dbReference type="SUPFAM" id="SSF81648">
    <property type="entry name" value="a domain/subunit of cytochrome bc1 complex (Ubiquinol-cytochrome c reductase)"/>
    <property type="match status" value="1"/>
</dbReference>
<dbReference type="SUPFAM" id="SSF81342">
    <property type="entry name" value="Transmembrane di-heme cytochromes"/>
    <property type="match status" value="1"/>
</dbReference>
<dbReference type="PROSITE" id="PS51003">
    <property type="entry name" value="CYTB_CTER"/>
    <property type="match status" value="1"/>
</dbReference>
<dbReference type="PROSITE" id="PS51002">
    <property type="entry name" value="CYTB_NTER"/>
    <property type="match status" value="1"/>
</dbReference>
<sequence>MAESMLSLPTPLNISIWWNMGSILGMILGLQLLTGILLSMHYSSQLEMAFSSIIHIIRDVPGGWFLRLLHANGASLFFLFMYAHIGRGLYYQSYIIHPRVWMVGVTIFLVSMATAFLGYVLPWGQMSFWGATVITNLLSAVPYFGPSMVEWVWGGFSVGHATLNRFFSLHFLLPFLISGLALLHIIFLHDKGSSNPLGNLFHLSKKPFHPYFTIKDSVGFLMVFGVLLMITFFSPSLLLDPENYISANPMVTPTHIQPEWYFLFAYAILRSIPSKLGGVVALLMSILILYFLPLSSYGKSIPVSMNIIYQVLFWILVVTFIILTWLGACEIEEPYLSLAGPLTLLYFLMFLLLGMSNNLNFNLIQLK</sequence>
<comment type="function">
    <text evidence="2">Component of the ubiquinol-cytochrome c reductase complex (complex III or cytochrome b-c1 complex) that is part of the mitochondrial respiratory chain. The b-c1 complex mediates electron transfer from ubiquinol to cytochrome c. Contributes to the generation of a proton gradient across the mitochondrial membrane that is then used for ATP synthesis.</text>
</comment>
<comment type="cofactor">
    <cofactor evidence="2">
        <name>heme b</name>
        <dbReference type="ChEBI" id="CHEBI:60344"/>
    </cofactor>
    <text evidence="2">Binds 2 heme b groups non-covalently.</text>
</comment>
<comment type="subunit">
    <text evidence="2">The main subunits of complex b-c1 are: cytochrome b, cytochrome c1 and the Rieske protein.</text>
</comment>
<comment type="subcellular location">
    <subcellularLocation>
        <location evidence="3">Mitochondrion inner membrane</location>
        <topology evidence="3">Multi-pass membrane protein</topology>
    </subcellularLocation>
</comment>
<comment type="miscellaneous">
    <text evidence="1">Heme 1 (or BL or b562) is low-potential and absorbs at about 562 nm, and heme 2 (or BH or b566) is high-potential and absorbs at about 566 nm.</text>
</comment>
<comment type="similarity">
    <text evidence="4 5">Belongs to the cytochrome b family.</text>
</comment>
<comment type="caution">
    <text evidence="2">The full-length protein contains only eight transmembrane helices, not nine as predicted by bioinformatics tools.</text>
</comment>
<gene>
    <name type="primary">MT-CYB</name>
    <name type="synonym">COB</name>
    <name type="synonym">CYTB</name>
    <name type="synonym">MTCYB</name>
</gene>